<name>Y2139_PHOLL</name>
<comment type="sequence caution" evidence="2">
    <conflict type="erroneous initiation">
        <sequence resource="EMBL-CDS" id="CAE14432"/>
    </conflict>
</comment>
<sequence>MICAIYSSPKREQTYLYVEKRDNFSRVPEELLKSFGQPQYTMMISLADRKKLAGADIEKVKISLIEQGFYLQIPPPVENLMNAHLSQMEK</sequence>
<dbReference type="EMBL" id="BX571866">
    <property type="protein sequence ID" value="CAE14432.1"/>
    <property type="status" value="ALT_INIT"/>
    <property type="molecule type" value="Genomic_DNA"/>
</dbReference>
<dbReference type="RefSeq" id="WP_041380069.1">
    <property type="nucleotide sequence ID" value="NC_005126.1"/>
</dbReference>
<dbReference type="SMR" id="Q7N521"/>
<dbReference type="STRING" id="243265.plu2139"/>
<dbReference type="GeneID" id="48848419"/>
<dbReference type="KEGG" id="plu:plu2139"/>
<dbReference type="eggNOG" id="COG3100">
    <property type="taxonomic scope" value="Bacteria"/>
</dbReference>
<dbReference type="HOGENOM" id="CLU_155118_1_0_6"/>
<dbReference type="OrthoDB" id="7062382at2"/>
<dbReference type="Proteomes" id="UP000002514">
    <property type="component" value="Chromosome"/>
</dbReference>
<dbReference type="Gene3D" id="3.10.510.20">
    <property type="entry name" value="YcgL domain"/>
    <property type="match status" value="1"/>
</dbReference>
<dbReference type="HAMAP" id="MF_01866">
    <property type="entry name" value="UPF0745"/>
    <property type="match status" value="1"/>
</dbReference>
<dbReference type="InterPro" id="IPR038068">
    <property type="entry name" value="YcgL-like_sf"/>
</dbReference>
<dbReference type="InterPro" id="IPR027354">
    <property type="entry name" value="YcgL_dom"/>
</dbReference>
<dbReference type="PANTHER" id="PTHR38109">
    <property type="entry name" value="PROTEIN YCGL"/>
    <property type="match status" value="1"/>
</dbReference>
<dbReference type="PANTHER" id="PTHR38109:SF1">
    <property type="entry name" value="PROTEIN YCGL"/>
    <property type="match status" value="1"/>
</dbReference>
<dbReference type="Pfam" id="PF05166">
    <property type="entry name" value="YcgL"/>
    <property type="match status" value="1"/>
</dbReference>
<dbReference type="SUPFAM" id="SSF160191">
    <property type="entry name" value="YcgL-like"/>
    <property type="match status" value="1"/>
</dbReference>
<dbReference type="PROSITE" id="PS51648">
    <property type="entry name" value="YCGL"/>
    <property type="match status" value="1"/>
</dbReference>
<proteinExistence type="inferred from homology"/>
<keyword id="KW-1185">Reference proteome</keyword>
<accession>Q7N521</accession>
<feature type="chain" id="PRO_0000375323" description="YcgL domain-containing protein plu2139">
    <location>
        <begin position="1"/>
        <end position="90"/>
    </location>
</feature>
<feature type="domain" description="YcgL" evidence="1">
    <location>
        <begin position="1"/>
        <end position="85"/>
    </location>
</feature>
<protein>
    <recommendedName>
        <fullName evidence="1">YcgL domain-containing protein plu2139</fullName>
    </recommendedName>
</protein>
<organism>
    <name type="scientific">Photorhabdus laumondii subsp. laumondii (strain DSM 15139 / CIP 105565 / TT01)</name>
    <name type="common">Photorhabdus luminescens subsp. laumondii</name>
    <dbReference type="NCBI Taxonomy" id="243265"/>
    <lineage>
        <taxon>Bacteria</taxon>
        <taxon>Pseudomonadati</taxon>
        <taxon>Pseudomonadota</taxon>
        <taxon>Gammaproteobacteria</taxon>
        <taxon>Enterobacterales</taxon>
        <taxon>Morganellaceae</taxon>
        <taxon>Photorhabdus</taxon>
    </lineage>
</organism>
<evidence type="ECO:0000255" key="1">
    <source>
        <dbReference type="HAMAP-Rule" id="MF_01866"/>
    </source>
</evidence>
<evidence type="ECO:0000305" key="2"/>
<reference key="1">
    <citation type="journal article" date="2003" name="Nat. Biotechnol.">
        <title>The genome sequence of the entomopathogenic bacterium Photorhabdus luminescens.</title>
        <authorList>
            <person name="Duchaud E."/>
            <person name="Rusniok C."/>
            <person name="Frangeul L."/>
            <person name="Buchrieser C."/>
            <person name="Givaudan A."/>
            <person name="Taourit S."/>
            <person name="Bocs S."/>
            <person name="Boursaux-Eude C."/>
            <person name="Chandler M."/>
            <person name="Charles J.-F."/>
            <person name="Dassa E."/>
            <person name="Derose R."/>
            <person name="Derzelle S."/>
            <person name="Freyssinet G."/>
            <person name="Gaudriault S."/>
            <person name="Medigue C."/>
            <person name="Lanois A."/>
            <person name="Powell K."/>
            <person name="Siguier P."/>
            <person name="Vincent R."/>
            <person name="Wingate V."/>
            <person name="Zouine M."/>
            <person name="Glaser P."/>
            <person name="Boemare N."/>
            <person name="Danchin A."/>
            <person name="Kunst F."/>
        </authorList>
    </citation>
    <scope>NUCLEOTIDE SEQUENCE [LARGE SCALE GENOMIC DNA]</scope>
    <source>
        <strain>DSM 15139 / CIP 105565 / TT01</strain>
    </source>
</reference>
<gene>
    <name type="ordered locus">plu2139</name>
</gene>